<feature type="chain" id="PRO_0000293616" description="Aminopyrimidine aminohydrolase">
    <location>
        <begin position="1"/>
        <end position="229"/>
    </location>
</feature>
<feature type="active site" description="Nucleophile" evidence="1">
    <location>
        <position position="137"/>
    </location>
</feature>
<feature type="active site" description="Proton donor" evidence="1">
    <location>
        <position position="208"/>
    </location>
</feature>
<feature type="binding site" evidence="1">
    <location>
        <position position="44"/>
    </location>
    <ligand>
        <name>substrate</name>
    </ligand>
</feature>
<feature type="binding site" evidence="1">
    <location>
        <position position="141"/>
    </location>
    <ligand>
        <name>substrate</name>
    </ligand>
</feature>
<feature type="binding site" evidence="1">
    <location>
        <position position="167"/>
    </location>
    <ligand>
        <name>substrate</name>
    </ligand>
</feature>
<feature type="site" description="Increases nucleophilicity of active site Cys" evidence="1">
    <location>
        <position position="47"/>
    </location>
</feature>
<proteinExistence type="inferred from homology"/>
<comment type="function">
    <text evidence="1 2">Catalyzes an amino-pyrimidine hydrolysis reaction at the C5' of the pyrimidine moiety of thiamine compounds, a reaction that is part of a thiamine salvage pathway. Thus, catalyzes the conversion of 4-amino-5-aminomethyl-2-methylpyrimidine to 4-amino-5-hydroxymethyl-2-methylpyrimidine (HMP). Is also able to catalyze the hydrolytic cleavage of thiamine; however, this thiaminase activity may not be physiologically relevant. Therefore, is probably involved in the regeneration of the thiamine pyrimidine from thiamine degraded products present in the environment, rather than in thiamine degradation.</text>
</comment>
<comment type="catalytic activity">
    <reaction evidence="1">
        <text>4-amino-5-aminomethyl-2-methylpyrimidine + H2O = 4-amino-5-hydroxymethyl-2-methylpyrimidine + NH4(+)</text>
        <dbReference type="Rhea" id="RHEA:31799"/>
        <dbReference type="ChEBI" id="CHEBI:15377"/>
        <dbReference type="ChEBI" id="CHEBI:16892"/>
        <dbReference type="ChEBI" id="CHEBI:28938"/>
        <dbReference type="ChEBI" id="CHEBI:63416"/>
        <dbReference type="EC" id="3.5.99.2"/>
    </reaction>
</comment>
<comment type="catalytic activity">
    <reaction evidence="2">
        <text>thiamine + H2O = 5-(2-hydroxyethyl)-4-methylthiazole + 4-amino-5-hydroxymethyl-2-methylpyrimidine + H(+)</text>
        <dbReference type="Rhea" id="RHEA:17509"/>
        <dbReference type="ChEBI" id="CHEBI:15377"/>
        <dbReference type="ChEBI" id="CHEBI:15378"/>
        <dbReference type="ChEBI" id="CHEBI:16892"/>
        <dbReference type="ChEBI" id="CHEBI:17957"/>
        <dbReference type="ChEBI" id="CHEBI:18385"/>
        <dbReference type="EC" id="3.5.99.2"/>
    </reaction>
</comment>
<comment type="pathway">
    <text evidence="1">Cofactor biosynthesis; thiamine diphosphate biosynthesis.</text>
</comment>
<comment type="subunit">
    <text evidence="2">Homotetramer.</text>
</comment>
<comment type="similarity">
    <text evidence="3">Belongs to the TenA family.</text>
</comment>
<organism>
    <name type="scientific">Staphylococcus epidermidis (strain ATCC 35984 / DSM 28319 / BCRC 17069 / CCUG 31568 / BM 3577 / RP62A)</name>
    <dbReference type="NCBI Taxonomy" id="176279"/>
    <lineage>
        <taxon>Bacteria</taxon>
        <taxon>Bacillati</taxon>
        <taxon>Bacillota</taxon>
        <taxon>Bacilli</taxon>
        <taxon>Bacillales</taxon>
        <taxon>Staphylococcaceae</taxon>
        <taxon>Staphylococcus</taxon>
    </lineage>
</organism>
<name>TENA_STAEQ</name>
<dbReference type="EC" id="3.5.99.2" evidence="2"/>
<dbReference type="EMBL" id="CP000029">
    <property type="protein sequence ID" value="AAW55079.1"/>
    <property type="molecule type" value="Genomic_DNA"/>
</dbReference>
<dbReference type="RefSeq" id="WP_001829894.1">
    <property type="nucleotide sequence ID" value="NC_002976.3"/>
</dbReference>
<dbReference type="SMR" id="Q5HMC7"/>
<dbReference type="STRING" id="176279.SERP1701"/>
<dbReference type="GeneID" id="50018207"/>
<dbReference type="KEGG" id="ser:SERP1701"/>
<dbReference type="eggNOG" id="COG0819">
    <property type="taxonomic scope" value="Bacteria"/>
</dbReference>
<dbReference type="HOGENOM" id="CLU_077537_3_1_9"/>
<dbReference type="UniPathway" id="UPA00060"/>
<dbReference type="Proteomes" id="UP000000531">
    <property type="component" value="Chromosome"/>
</dbReference>
<dbReference type="GO" id="GO:0005829">
    <property type="term" value="C:cytosol"/>
    <property type="evidence" value="ECO:0007669"/>
    <property type="project" value="TreeGrafter"/>
</dbReference>
<dbReference type="GO" id="GO:0050334">
    <property type="term" value="F:thiaminase activity"/>
    <property type="evidence" value="ECO:0007669"/>
    <property type="project" value="UniProtKB-EC"/>
</dbReference>
<dbReference type="GO" id="GO:0009228">
    <property type="term" value="P:thiamine biosynthetic process"/>
    <property type="evidence" value="ECO:0007669"/>
    <property type="project" value="UniProtKB-KW"/>
</dbReference>
<dbReference type="GO" id="GO:0009229">
    <property type="term" value="P:thiamine diphosphate biosynthetic process"/>
    <property type="evidence" value="ECO:0007669"/>
    <property type="project" value="UniProtKB-UniPathway"/>
</dbReference>
<dbReference type="CDD" id="cd19360">
    <property type="entry name" value="TenA_C_SaTenA-like"/>
    <property type="match status" value="1"/>
</dbReference>
<dbReference type="Gene3D" id="1.20.910.10">
    <property type="entry name" value="Heme oxygenase-like"/>
    <property type="match status" value="1"/>
</dbReference>
<dbReference type="InterPro" id="IPR016084">
    <property type="entry name" value="Haem_Oase-like_multi-hlx"/>
</dbReference>
<dbReference type="InterPro" id="IPR004305">
    <property type="entry name" value="Thiaminase-2/PQQC"/>
</dbReference>
<dbReference type="InterPro" id="IPR027574">
    <property type="entry name" value="Thiaminase_II"/>
</dbReference>
<dbReference type="InterPro" id="IPR050967">
    <property type="entry name" value="Thiamine_Salvage_TenA"/>
</dbReference>
<dbReference type="NCBIfam" id="TIGR04306">
    <property type="entry name" value="salvage_TenA"/>
    <property type="match status" value="1"/>
</dbReference>
<dbReference type="PANTHER" id="PTHR43198">
    <property type="entry name" value="BIFUNCTIONAL TH2 PROTEIN"/>
    <property type="match status" value="1"/>
</dbReference>
<dbReference type="PANTHER" id="PTHR43198:SF2">
    <property type="entry name" value="SI:CH1073-67J19.1-RELATED"/>
    <property type="match status" value="1"/>
</dbReference>
<dbReference type="Pfam" id="PF03070">
    <property type="entry name" value="TENA_THI-4"/>
    <property type="match status" value="1"/>
</dbReference>
<dbReference type="SUPFAM" id="SSF48613">
    <property type="entry name" value="Heme oxygenase-like"/>
    <property type="match status" value="1"/>
</dbReference>
<reference key="1">
    <citation type="journal article" date="2005" name="J. Bacteriol.">
        <title>Insights on evolution of virulence and resistance from the complete genome analysis of an early methicillin-resistant Staphylococcus aureus strain and a biofilm-producing methicillin-resistant Staphylococcus epidermidis strain.</title>
        <authorList>
            <person name="Gill S.R."/>
            <person name="Fouts D.E."/>
            <person name="Archer G.L."/>
            <person name="Mongodin E.F."/>
            <person name="DeBoy R.T."/>
            <person name="Ravel J."/>
            <person name="Paulsen I.T."/>
            <person name="Kolonay J.F."/>
            <person name="Brinkac L.M."/>
            <person name="Beanan M.J."/>
            <person name="Dodson R.J."/>
            <person name="Daugherty S.C."/>
            <person name="Madupu R."/>
            <person name="Angiuoli S.V."/>
            <person name="Durkin A.S."/>
            <person name="Haft D.H."/>
            <person name="Vamathevan J.J."/>
            <person name="Khouri H."/>
            <person name="Utterback T.R."/>
            <person name="Lee C."/>
            <person name="Dimitrov G."/>
            <person name="Jiang L."/>
            <person name="Qin H."/>
            <person name="Weidman J."/>
            <person name="Tran K."/>
            <person name="Kang K.H."/>
            <person name="Hance I.R."/>
            <person name="Nelson K.E."/>
            <person name="Fraser C.M."/>
        </authorList>
    </citation>
    <scope>NUCLEOTIDE SEQUENCE [LARGE SCALE GENOMIC DNA]</scope>
    <source>
        <strain>ATCC 35984 / DSM 28319 / BCRC 17069 / CCUG 31568 / BM 3577 / RP62A</strain>
    </source>
</reference>
<evidence type="ECO:0000250" key="1">
    <source>
        <dbReference type="UniProtKB" id="P25052"/>
    </source>
</evidence>
<evidence type="ECO:0000250" key="2">
    <source>
        <dbReference type="UniProtKB" id="Q6GEY1"/>
    </source>
</evidence>
<evidence type="ECO:0000305" key="3"/>
<keyword id="KW-0378">Hydrolase</keyword>
<keyword id="KW-1185">Reference proteome</keyword>
<keyword id="KW-0784">Thiamine biosynthesis</keyword>
<protein>
    <recommendedName>
        <fullName evidence="1">Aminopyrimidine aminohydrolase</fullName>
        <ecNumber evidence="2">3.5.99.2</ecNumber>
    </recommendedName>
    <alternativeName>
        <fullName evidence="2">Thiaminase II</fullName>
    </alternativeName>
</protein>
<accession>Q5HMC7</accession>
<gene>
    <name type="primary">tenA</name>
    <name type="ordered locus">SERP1701</name>
</gene>
<sequence>MTFSKELREASRPIIDDIYNDGFIQDLLAGKLSNQAVRQYLRADASYLKEFTNIYAMLIPKMSSMEDVKFLVEQIEFMLEGEVEAHEVLADFINEPYEEIVKEKVWPPSGDHYIKHMYFNAFARENAAFTIAAMAPCPYVYAVIGKRAMEDPKLNKESVTSKWFQFYSTEMDELVDVFDQLMDRLTKHCSETEKKEIKENFLQSTIHERHFFNMAYINEKWEYGGNNNE</sequence>